<dbReference type="EMBL" id="Z50046">
    <property type="protein sequence ID" value="CAA90380.1"/>
    <property type="molecule type" value="Genomic_DNA"/>
</dbReference>
<dbReference type="EMBL" id="BK006938">
    <property type="protein sequence ID" value="DAA12000.1"/>
    <property type="molecule type" value="Genomic_DNA"/>
</dbReference>
<dbReference type="PIR" id="S57984">
    <property type="entry name" value="S57984"/>
</dbReference>
<dbReference type="RefSeq" id="NP_010444.1">
    <property type="nucleotide sequence ID" value="NM_001180467.1"/>
</dbReference>
<dbReference type="BioGRID" id="32211">
    <property type="interactions" value="108"/>
</dbReference>
<dbReference type="DIP" id="DIP-2920N"/>
<dbReference type="FunCoup" id="Q03770">
    <property type="interactions" value="183"/>
</dbReference>
<dbReference type="IntAct" id="Q03770">
    <property type="interactions" value="4"/>
</dbReference>
<dbReference type="MINT" id="Q03770"/>
<dbReference type="STRING" id="4932.YDR160W"/>
<dbReference type="TCDB" id="2.A.3.10.12">
    <property type="family name" value="the amino acid-polyamine-organocation (apc) family"/>
</dbReference>
<dbReference type="iPTMnet" id="Q03770"/>
<dbReference type="PaxDb" id="4932-YDR160W"/>
<dbReference type="PeptideAtlas" id="Q03770"/>
<dbReference type="EnsemblFungi" id="YDR160W_mRNA">
    <property type="protein sequence ID" value="YDR160W"/>
    <property type="gene ID" value="YDR160W"/>
</dbReference>
<dbReference type="GeneID" id="851738"/>
<dbReference type="KEGG" id="sce:YDR160W"/>
<dbReference type="AGR" id="SGD:S000002567"/>
<dbReference type="SGD" id="S000002567">
    <property type="gene designation" value="SSY1"/>
</dbReference>
<dbReference type="VEuPathDB" id="FungiDB:YDR160W"/>
<dbReference type="eggNOG" id="KOG1286">
    <property type="taxonomic scope" value="Eukaryota"/>
</dbReference>
<dbReference type="HOGENOM" id="CLU_007946_8_6_1"/>
<dbReference type="InParanoid" id="Q03770"/>
<dbReference type="OMA" id="FIRFYYG"/>
<dbReference type="OrthoDB" id="3900342at2759"/>
<dbReference type="BioCyc" id="YEAST:G3O-29750-MONOMER"/>
<dbReference type="BioGRID-ORCS" id="851738">
    <property type="hits" value="0 hits in 10 CRISPR screens"/>
</dbReference>
<dbReference type="PRO" id="PR:Q03770"/>
<dbReference type="Proteomes" id="UP000002311">
    <property type="component" value="Chromosome IV"/>
</dbReference>
<dbReference type="RNAct" id="Q03770">
    <property type="molecule type" value="protein"/>
</dbReference>
<dbReference type="GO" id="GO:0005783">
    <property type="term" value="C:endoplasmic reticulum"/>
    <property type="evidence" value="ECO:0007005"/>
    <property type="project" value="SGD"/>
</dbReference>
<dbReference type="GO" id="GO:0016020">
    <property type="term" value="C:membrane"/>
    <property type="evidence" value="ECO:0000318"/>
    <property type="project" value="GO_Central"/>
</dbReference>
<dbReference type="GO" id="GO:0005886">
    <property type="term" value="C:plasma membrane"/>
    <property type="evidence" value="ECO:0000314"/>
    <property type="project" value="SGD"/>
</dbReference>
<dbReference type="GO" id="GO:0015171">
    <property type="term" value="F:amino acid transmembrane transporter activity"/>
    <property type="evidence" value="ECO:0000318"/>
    <property type="project" value="GO_Central"/>
</dbReference>
<dbReference type="GO" id="GO:0003333">
    <property type="term" value="P:amino acid transmembrane transport"/>
    <property type="evidence" value="ECO:0000318"/>
    <property type="project" value="GO_Central"/>
</dbReference>
<dbReference type="GO" id="GO:0043200">
    <property type="term" value="P:response to amino acid"/>
    <property type="evidence" value="ECO:0000315"/>
    <property type="project" value="SGD"/>
</dbReference>
<dbReference type="Gene3D" id="1.20.1740.10">
    <property type="entry name" value="Amino acid/polyamine transporter I"/>
    <property type="match status" value="1"/>
</dbReference>
<dbReference type="InterPro" id="IPR004841">
    <property type="entry name" value="AA-permease/SLC12A_dom"/>
</dbReference>
<dbReference type="InterPro" id="IPR004762">
    <property type="entry name" value="Amino_acid_permease_fungi"/>
</dbReference>
<dbReference type="InterPro" id="IPR050524">
    <property type="entry name" value="APC_YAT"/>
</dbReference>
<dbReference type="NCBIfam" id="TIGR00913">
    <property type="entry name" value="2A0310"/>
    <property type="match status" value="1"/>
</dbReference>
<dbReference type="PANTHER" id="PTHR43341">
    <property type="entry name" value="AMINO ACID PERMEASE"/>
    <property type="match status" value="1"/>
</dbReference>
<dbReference type="PANTHER" id="PTHR43341:SF46">
    <property type="entry name" value="SPS-SENSOR COMPONENT SSY1"/>
    <property type="match status" value="1"/>
</dbReference>
<dbReference type="Pfam" id="PF00324">
    <property type="entry name" value="AA_permease"/>
    <property type="match status" value="1"/>
</dbReference>
<sequence length="852" mass="95744">MSSVNQIYDLFPNKHNIQFTDSHSQEHDTSSSLAKNDTDGTISIPGSIDTGILKSIIEEQGWNDAELYRSSIQNQRFFLTDKYTKKKHLTMEDMLSPEEEQIYQEPIQDFQTYNKRVQREYELRERMEEFFRQNTKNDLHILNEDSLNQQYSPLGPADYVLPLDRYSRMKHIASNFFRKKLGIPRKLKRRSHYNPNAEGHTKGNSSILSSTTDVIDNASYRNIAIDENVDITHKEHAIDEINEQGASGSESVVEGGSLLHDIEKVFNRSRATRKYHIQRKLKVRHIQMLSIGACFSVGLFLTSGKAFSIAGPFGTLLGFGLTGSIILATMLSFTELSTLIPVSSGFSGLASRFVEDAFGFALGWTYWISCMLALPAQVSSSTFYLSYYNNVNISKGVTAGFITLFSAFSIVVNLLDVSIMGEIVYVAGISKVIIAILMVFTMIILNAGHGNDIHEGVGFRYWDSSKSVRNLTYGLYRPTFDLADAGEGSKKGISGPKGRFLATASVMLISTFAFSGVEMTFLASGEAINPRKTIPSATKRTFSIVLISYVFLIFSVGINIYSGDPRLLSYFPGISEKRYEAIIKGTGMDWRLRTNCRGGIDYRQISVGTGYSSPWVVALQNFGLCTFASAFNAILIFFTATAGISSLFSCSRTLYAMSVQRKAPPVFEICSKRGVPYVSVIFSSLFSVIAYIAVDQTAIENFDVLANVSSASTSIIWMGLNLSFLRFYYALKQRKDIISRNDSSYPYKSPFQPYLAIYGLVGCSLFVIFMGYPNFIHHFWSTKAFFSAYGGLMFFFISYTAYKVLGTSKIQRLDQLDMDSGRREMDRTDWTEHSQYLGTYRERAKKLVTWLI</sequence>
<keyword id="KW-1003">Cell membrane</keyword>
<keyword id="KW-0472">Membrane</keyword>
<keyword id="KW-1185">Reference proteome</keyword>
<keyword id="KW-0812">Transmembrane</keyword>
<keyword id="KW-1133">Transmembrane helix</keyword>
<proteinExistence type="evidence at protein level"/>
<name>SSY1_YEAST</name>
<evidence type="ECO:0000255" key="1"/>
<evidence type="ECO:0000256" key="2">
    <source>
        <dbReference type="SAM" id="MobiDB-lite"/>
    </source>
</evidence>
<evidence type="ECO:0000269" key="3">
    <source>
    </source>
</evidence>
<evidence type="ECO:0000269" key="4">
    <source>
    </source>
</evidence>
<evidence type="ECO:0000269" key="5">
    <source>
    </source>
</evidence>
<evidence type="ECO:0000269" key="6">
    <source>
    </source>
</evidence>
<evidence type="ECO:0000269" key="7">
    <source>
    </source>
</evidence>
<evidence type="ECO:0000269" key="8">
    <source>
    </source>
</evidence>
<evidence type="ECO:0000269" key="9">
    <source>
    </source>
</evidence>
<evidence type="ECO:0000269" key="10">
    <source>
    </source>
</evidence>
<evidence type="ECO:0000269" key="11">
    <source>
    </source>
</evidence>
<evidence type="ECO:0000305" key="12"/>
<comment type="function">
    <text evidence="3 4 5 6 7 8 9 10 11">Amino acid sensor component of the SPS-sensor system, which regulates the expression of several amino acid-metabolizing enzymes and amino acid- and peptide-permeases in response to extracellular amino acid levels by controlling the activity of two transcription factors, STP1 and STP2. Amino-acid permease homolog that seems to interact directly with the extracellular signaling molecules, but has no amino acid transporter activity. May recruit casein kinases YCK1 and YCK2 to hyperphosphorylate and activate downstream component PTR3 in response to amino acid stimulus.</text>
</comment>
<comment type="subunit">
    <text evidence="9">Component of the plasma membrane SPS (SSY1-PTR3-SSY5) amino acid sensor complex. Interacts directly with PTR3 and SSY5. Interacts with YCK1.</text>
</comment>
<comment type="subcellular location">
    <subcellularLocation>
        <location evidence="3 4">Cell membrane</location>
        <topology evidence="3 4">Multi-pass membrane protein</topology>
    </subcellularLocation>
</comment>
<comment type="similarity">
    <text evidence="12">Belongs to the amino acid-polyamine-organocation (APC) superfamily.</text>
</comment>
<organism>
    <name type="scientific">Saccharomyces cerevisiae (strain ATCC 204508 / S288c)</name>
    <name type="common">Baker's yeast</name>
    <dbReference type="NCBI Taxonomy" id="559292"/>
    <lineage>
        <taxon>Eukaryota</taxon>
        <taxon>Fungi</taxon>
        <taxon>Dikarya</taxon>
        <taxon>Ascomycota</taxon>
        <taxon>Saccharomycotina</taxon>
        <taxon>Saccharomycetes</taxon>
        <taxon>Saccharomycetales</taxon>
        <taxon>Saccharomycetaceae</taxon>
        <taxon>Saccharomyces</taxon>
    </lineage>
</organism>
<protein>
    <recommendedName>
        <fullName>SPS-sensor component SSY1</fullName>
    </recommendedName>
    <alternativeName>
        <fullName>Amino-acid permease homolog SSY1</fullName>
    </alternativeName>
</protein>
<reference key="1">
    <citation type="journal article" date="1997" name="Nature">
        <title>The nucleotide sequence of Saccharomyces cerevisiae chromosome IV.</title>
        <authorList>
            <person name="Jacq C."/>
            <person name="Alt-Moerbe J."/>
            <person name="Andre B."/>
            <person name="Arnold W."/>
            <person name="Bahr A."/>
            <person name="Ballesta J.P.G."/>
            <person name="Bargues M."/>
            <person name="Baron L."/>
            <person name="Becker A."/>
            <person name="Biteau N."/>
            <person name="Bloecker H."/>
            <person name="Blugeon C."/>
            <person name="Boskovic J."/>
            <person name="Brandt P."/>
            <person name="Brueckner M."/>
            <person name="Buitrago M.J."/>
            <person name="Coster F."/>
            <person name="Delaveau T."/>
            <person name="del Rey F."/>
            <person name="Dujon B."/>
            <person name="Eide L.G."/>
            <person name="Garcia-Cantalejo J.M."/>
            <person name="Goffeau A."/>
            <person name="Gomez-Peris A."/>
            <person name="Granotier C."/>
            <person name="Hanemann V."/>
            <person name="Hankeln T."/>
            <person name="Hoheisel J.D."/>
            <person name="Jaeger W."/>
            <person name="Jimenez A."/>
            <person name="Jonniaux J.-L."/>
            <person name="Kraemer C."/>
            <person name="Kuester H."/>
            <person name="Laamanen P."/>
            <person name="Legros Y."/>
            <person name="Louis E.J."/>
            <person name="Moeller-Rieker S."/>
            <person name="Monnet A."/>
            <person name="Moro M."/>
            <person name="Mueller-Auer S."/>
            <person name="Nussbaumer B."/>
            <person name="Paricio N."/>
            <person name="Paulin L."/>
            <person name="Perea J."/>
            <person name="Perez-Alonso M."/>
            <person name="Perez-Ortin J.E."/>
            <person name="Pohl T.M."/>
            <person name="Prydz H."/>
            <person name="Purnelle B."/>
            <person name="Rasmussen S.W."/>
            <person name="Remacha M.A."/>
            <person name="Revuelta J.L."/>
            <person name="Rieger M."/>
            <person name="Salom D."/>
            <person name="Saluz H.P."/>
            <person name="Saiz J.E."/>
            <person name="Saren A.-M."/>
            <person name="Schaefer M."/>
            <person name="Scharfe M."/>
            <person name="Schmidt E.R."/>
            <person name="Schneider C."/>
            <person name="Scholler P."/>
            <person name="Schwarz S."/>
            <person name="Soler-Mira A."/>
            <person name="Urrestarazu L.A."/>
            <person name="Verhasselt P."/>
            <person name="Vissers S."/>
            <person name="Voet M."/>
            <person name="Volckaert G."/>
            <person name="Wagner G."/>
            <person name="Wambutt R."/>
            <person name="Wedler E."/>
            <person name="Wedler H."/>
            <person name="Woelfl S."/>
            <person name="Harris D.E."/>
            <person name="Bowman S."/>
            <person name="Brown D."/>
            <person name="Churcher C.M."/>
            <person name="Connor R."/>
            <person name="Dedman K."/>
            <person name="Gentles S."/>
            <person name="Hamlin N."/>
            <person name="Hunt S."/>
            <person name="Jones L."/>
            <person name="McDonald S."/>
            <person name="Murphy L.D."/>
            <person name="Niblett D."/>
            <person name="Odell C."/>
            <person name="Oliver K."/>
            <person name="Rajandream M.A."/>
            <person name="Richards C."/>
            <person name="Shore L."/>
            <person name="Walsh S.V."/>
            <person name="Barrell B.G."/>
            <person name="Dietrich F.S."/>
            <person name="Mulligan J.T."/>
            <person name="Allen E."/>
            <person name="Araujo R."/>
            <person name="Aviles E."/>
            <person name="Berno A."/>
            <person name="Carpenter J."/>
            <person name="Chen E."/>
            <person name="Cherry J.M."/>
            <person name="Chung E."/>
            <person name="Duncan M."/>
            <person name="Hunicke-Smith S."/>
            <person name="Hyman R.W."/>
            <person name="Komp C."/>
            <person name="Lashkari D."/>
            <person name="Lew H."/>
            <person name="Lin D."/>
            <person name="Mosedale D."/>
            <person name="Nakahara K."/>
            <person name="Namath A."/>
            <person name="Oefner P."/>
            <person name="Oh C."/>
            <person name="Petel F.X."/>
            <person name="Roberts D."/>
            <person name="Schramm S."/>
            <person name="Schroeder M."/>
            <person name="Shogren T."/>
            <person name="Shroff N."/>
            <person name="Winant A."/>
            <person name="Yelton M.A."/>
            <person name="Botstein D."/>
            <person name="Davis R.W."/>
            <person name="Johnston M."/>
            <person name="Andrews S."/>
            <person name="Brinkman R."/>
            <person name="Cooper J."/>
            <person name="Ding H."/>
            <person name="Du Z."/>
            <person name="Favello A."/>
            <person name="Fulton L."/>
            <person name="Gattung S."/>
            <person name="Greco T."/>
            <person name="Hallsworth K."/>
            <person name="Hawkins J."/>
            <person name="Hillier L.W."/>
            <person name="Jier M."/>
            <person name="Johnson D."/>
            <person name="Johnston L."/>
            <person name="Kirsten J."/>
            <person name="Kucaba T."/>
            <person name="Langston Y."/>
            <person name="Latreille P."/>
            <person name="Le T."/>
            <person name="Mardis E."/>
            <person name="Menezes S."/>
            <person name="Miller N."/>
            <person name="Nhan M."/>
            <person name="Pauley A."/>
            <person name="Peluso D."/>
            <person name="Rifkin L."/>
            <person name="Riles L."/>
            <person name="Taich A."/>
            <person name="Trevaskis E."/>
            <person name="Vignati D."/>
            <person name="Wilcox L."/>
            <person name="Wohldman P."/>
            <person name="Vaudin M."/>
            <person name="Wilson R."/>
            <person name="Waterston R."/>
            <person name="Albermann K."/>
            <person name="Hani J."/>
            <person name="Heumann K."/>
            <person name="Kleine K."/>
            <person name="Mewes H.-W."/>
            <person name="Zollner A."/>
            <person name="Zaccaria P."/>
        </authorList>
    </citation>
    <scope>NUCLEOTIDE SEQUENCE [LARGE SCALE GENOMIC DNA]</scope>
    <source>
        <strain>ATCC 204508 / S288c</strain>
    </source>
</reference>
<reference key="2">
    <citation type="journal article" date="2014" name="G3 (Bethesda)">
        <title>The reference genome sequence of Saccharomyces cerevisiae: Then and now.</title>
        <authorList>
            <person name="Engel S.R."/>
            <person name="Dietrich F.S."/>
            <person name="Fisk D.G."/>
            <person name="Binkley G."/>
            <person name="Balakrishnan R."/>
            <person name="Costanzo M.C."/>
            <person name="Dwight S.S."/>
            <person name="Hitz B.C."/>
            <person name="Karra K."/>
            <person name="Nash R.S."/>
            <person name="Weng S."/>
            <person name="Wong E.D."/>
            <person name="Lloyd P."/>
            <person name="Skrzypek M.S."/>
            <person name="Miyasato S.R."/>
            <person name="Simison M."/>
            <person name="Cherry J.M."/>
        </authorList>
    </citation>
    <scope>GENOME REANNOTATION</scope>
    <source>
        <strain>ATCC 204508 / S288c</strain>
    </source>
</reference>
<reference key="3">
    <citation type="journal article" date="1998" name="Mol. Microbiol.">
        <title>The permease homologue Ssy1p controls the expression of amino acid and peptide transporter genes in Saccharomyces cerevisiae.</title>
        <authorList>
            <person name="Didion T."/>
            <person name="Regenberg B."/>
            <person name="Joergensen M.U."/>
            <person name="Kielland-Brandt M.C."/>
            <person name="Andersen H.A."/>
        </authorList>
    </citation>
    <scope>FUNCTION</scope>
</reference>
<reference key="4">
    <citation type="journal article" date="1998" name="Yeast">
        <title>Mutations in five loci affecting GAP1-independent uptake of neutral amino acids in yeast.</title>
        <authorList>
            <person name="Joergensen M.U."/>
            <person name="Bruun M.B."/>
            <person name="Didion T."/>
            <person name="Kielland-Brandt M.C."/>
        </authorList>
    </citation>
    <scope>IDENTIFICATION</scope>
</reference>
<reference key="5">
    <citation type="journal article" date="1999" name="Mol. Cell. Biol.">
        <title>Amino acid signaling in Saccharomyces cerevisiae: a permease-like sensor of external amino acids and F-Box protein Grr1p are required for transcriptional induction of the AGP1 gene, which encodes a broad-specificity amino acid permease.</title>
        <authorList>
            <person name="Iraqui I."/>
            <person name="Vissers S."/>
            <person name="Bernard F."/>
            <person name="de Craene J.-O."/>
            <person name="Boles E."/>
            <person name="Urrestarazu A."/>
            <person name="Andre B."/>
        </authorList>
    </citation>
    <scope>FUNCTION</scope>
</reference>
<reference key="6">
    <citation type="journal article" date="1999" name="Mol. Cell. Biol.">
        <title>Ssy1p and Ptr3p are plasma membrane components of a yeast system that senses extracellular amino acids.</title>
        <authorList>
            <person name="Klasson H."/>
            <person name="Fink G.R."/>
            <person name="Ljungdahl P.O."/>
        </authorList>
    </citation>
    <scope>FUNCTION</scope>
    <scope>SUBCELLULAR LOCATION</scope>
</reference>
<reference key="7">
    <citation type="journal article" date="2001" name="Mol. Cell. Biol.">
        <title>Genetic and biochemical analysis of the yeast plasma membrane Ssy1p-Ptr3p-Ssy5p sensor of extracellular amino acids.</title>
        <authorList>
            <person name="Forsberg H."/>
            <person name="Ljungdahl P.O."/>
        </authorList>
    </citation>
    <scope>FUNCTION</scope>
    <scope>SUBCELLULAR LOCATION</scope>
</reference>
<reference key="8">
    <citation type="journal article" date="2001" name="Mol. Microbiol.">
        <title>The role of the yeast plasma membrane SPS nutrient sensor in the metabolic response to extracellular amino acids.</title>
        <authorList>
            <person name="Forsberg H."/>
            <person name="Gilstring C.F."/>
            <person name="Zargari A."/>
            <person name="Martinez P."/>
            <person name="Ljungdahl P.O."/>
        </authorList>
    </citation>
    <scope>FUNCTION</scope>
</reference>
<reference key="9">
    <citation type="journal article" date="2002" name="Curr. Genet.">
        <title>Genome-wide expression analysis of genes affected by amino acid sensor Ssy1p in Saccharomyces cerevisiae.</title>
        <authorList>
            <person name="Kodama Y."/>
            <person name="Omura F."/>
            <person name="Takahashi K."/>
            <person name="Shirahige K."/>
            <person name="Ashikari T."/>
        </authorList>
    </citation>
    <scope>FUNCTION</scope>
</reference>
<reference key="10">
    <citation type="journal article" date="2002" name="Genes Dev.">
        <title>Receptor-mediated endoproteolytic activation of two transcription factors in yeast.</title>
        <authorList>
            <person name="Andreasson C."/>
            <person name="Ljungdahl P.O."/>
        </authorList>
    </citation>
    <scope>FUNCTION</scope>
</reference>
<reference key="11">
    <citation type="journal article" date="2003" name="Eukaryot. Cell">
        <title>Constitutive and hyperresponsive signaling by mutant forms of Saccharomyces cerevisiae amino acid sensor Ssy1.</title>
        <authorList>
            <person name="Gaber R.F."/>
            <person name="Ottow K."/>
            <person name="Andersen H.A."/>
            <person name="Kielland-Brandt M.C."/>
        </authorList>
    </citation>
    <scope>FUNCTION</scope>
    <scope>MUTAGENESIS OF THR-382</scope>
</reference>
<reference key="12">
    <citation type="journal article" date="2006" name="Proc. Natl. Acad. Sci. U.S.A.">
        <title>A global topology map of the Saccharomyces cerevisiae membrane proteome.</title>
        <authorList>
            <person name="Kim H."/>
            <person name="Melen K."/>
            <person name="Oesterberg M."/>
            <person name="von Heijne G."/>
        </authorList>
    </citation>
    <scope>TOPOLOGY [LARGE SCALE ANALYSIS]</scope>
    <source>
        <strain>ATCC 208353 / W303-1A</strain>
    </source>
</reference>
<reference key="13">
    <citation type="journal article" date="2008" name="Mol. Cell. Biol.">
        <title>Activation of the SPS amino acid-sensing pathway in Saccharomyces cerevisiae correlates with the phosphorylation state of a sensor component, Ptr3.</title>
        <authorList>
            <person name="Liu Z."/>
            <person name="Thornton J."/>
            <person name="Spirek M."/>
            <person name="Butow R.A."/>
        </authorList>
    </citation>
    <scope>FUNCTION</scope>
    <scope>INTERACTION WITH PTR3; SSY5 AND YCK1</scope>
</reference>
<feature type="chain" id="PRO_0000054164" description="SPS-sensor component SSY1">
    <location>
        <begin position="1"/>
        <end position="852"/>
    </location>
</feature>
<feature type="topological domain" description="Cytoplasmic" evidence="1">
    <location>
        <begin position="1"/>
        <end position="285"/>
    </location>
</feature>
<feature type="transmembrane region" description="Helical" evidence="1">
    <location>
        <begin position="286"/>
        <end position="306"/>
    </location>
</feature>
<feature type="topological domain" description="Extracellular" evidence="1">
    <location>
        <begin position="307"/>
        <end position="329"/>
    </location>
</feature>
<feature type="transmembrane region" description="Helical" evidence="1">
    <location>
        <begin position="330"/>
        <end position="350"/>
    </location>
</feature>
<feature type="topological domain" description="Cytoplasmic" evidence="1">
    <location>
        <begin position="351"/>
        <end position="357"/>
    </location>
</feature>
<feature type="transmembrane region" description="Helical" evidence="1">
    <location>
        <begin position="358"/>
        <end position="378"/>
    </location>
</feature>
<feature type="topological domain" description="Extracellular" evidence="1">
    <location>
        <begin position="379"/>
        <end position="400"/>
    </location>
</feature>
<feature type="transmembrane region" description="Helical" evidence="1">
    <location>
        <begin position="401"/>
        <end position="421"/>
    </location>
</feature>
<feature type="topological domain" description="Cytoplasmic" evidence="1">
    <location>
        <position position="422"/>
    </location>
</feature>
<feature type="transmembrane region" description="Helical" evidence="1">
    <location>
        <begin position="423"/>
        <end position="443"/>
    </location>
</feature>
<feature type="topological domain" description="Extracellular" evidence="1">
    <location>
        <begin position="444"/>
        <end position="500"/>
    </location>
</feature>
<feature type="transmembrane region" description="Helical" evidence="1">
    <location>
        <begin position="501"/>
        <end position="521"/>
    </location>
</feature>
<feature type="topological domain" description="Cytoplasmic" evidence="1">
    <location>
        <begin position="522"/>
        <end position="540"/>
    </location>
</feature>
<feature type="transmembrane region" description="Helical" evidence="1">
    <location>
        <begin position="541"/>
        <end position="561"/>
    </location>
</feature>
<feature type="topological domain" description="Extracellular" evidence="1">
    <location>
        <begin position="562"/>
        <end position="623"/>
    </location>
</feature>
<feature type="transmembrane region" description="Helical" evidence="1">
    <location>
        <begin position="624"/>
        <end position="644"/>
    </location>
</feature>
<feature type="topological domain" description="Cytoplasmic" evidence="1">
    <location>
        <begin position="645"/>
        <end position="673"/>
    </location>
</feature>
<feature type="transmembrane region" description="Helical" evidence="1">
    <location>
        <begin position="674"/>
        <end position="694"/>
    </location>
</feature>
<feature type="topological domain" description="Extracellular" evidence="1">
    <location>
        <begin position="695"/>
        <end position="703"/>
    </location>
</feature>
<feature type="transmembrane region" description="Helical" evidence="1">
    <location>
        <begin position="704"/>
        <end position="724"/>
    </location>
</feature>
<feature type="topological domain" description="Cytoplasmic" evidence="1">
    <location>
        <begin position="725"/>
        <end position="755"/>
    </location>
</feature>
<feature type="transmembrane region" description="Helical" evidence="1">
    <location>
        <begin position="756"/>
        <end position="776"/>
    </location>
</feature>
<feature type="topological domain" description="Extracellular" evidence="1">
    <location>
        <begin position="777"/>
        <end position="784"/>
    </location>
</feature>
<feature type="transmembrane region" description="Helical" evidence="1">
    <location>
        <begin position="785"/>
        <end position="805"/>
    </location>
</feature>
<feature type="topological domain" description="Cytoplasmic" evidence="1">
    <location>
        <begin position="806"/>
        <end position="852"/>
    </location>
</feature>
<feature type="region of interest" description="Disordered" evidence="2">
    <location>
        <begin position="21"/>
        <end position="41"/>
    </location>
</feature>
<feature type="compositionally biased region" description="Polar residues" evidence="2">
    <location>
        <begin position="30"/>
        <end position="41"/>
    </location>
</feature>
<feature type="mutagenesis site" description="Constitutively active, up-regulates amino acid permease transcription in response to subthreshold concentrations of amino acids." evidence="8">
    <original>T</original>
    <variation>H</variation>
    <variation>L</variation>
    <location>
        <position position="382"/>
    </location>
</feature>
<feature type="mutagenesis site" description="In SSY1-102; constitutively active, up-regulates amino acid permease transcription in the absence of amino-acids." evidence="8">
    <original>T</original>
    <variation>K</variation>
    <location>
        <position position="382"/>
    </location>
</feature>
<feature type="mutagenesis site" description="Constitutively active, up-regulates amino acid permease transcription in the absence of amino acids." evidence="8">
    <original>T</original>
    <variation>R</variation>
    <location>
        <position position="382"/>
    </location>
</feature>
<accession>Q03770</accession>
<accession>D6VSE0</accession>
<gene>
    <name type="primary">SSY1</name>
    <name type="synonym">APF7</name>
    <name type="synonym">SHR10</name>
    <name type="ordered locus">YDR160W</name>
    <name type="ORF">YD8358.14</name>
</gene>